<feature type="chain" id="PRO_0000149324" description="DNA-directed RNA polymerase subunit Rpo11">
    <location>
        <begin position="1"/>
        <end position="94"/>
    </location>
</feature>
<reference key="1">
    <citation type="journal article" date="2000" name="Proc. Natl. Acad. Sci. U.S.A.">
        <title>Genome sequence of Halobacterium species NRC-1.</title>
        <authorList>
            <person name="Ng W.V."/>
            <person name="Kennedy S.P."/>
            <person name="Mahairas G.G."/>
            <person name="Berquist B."/>
            <person name="Pan M."/>
            <person name="Shukla H.D."/>
            <person name="Lasky S.R."/>
            <person name="Baliga N.S."/>
            <person name="Thorsson V."/>
            <person name="Sbrogna J."/>
            <person name="Swartzell S."/>
            <person name="Weir D."/>
            <person name="Hall J."/>
            <person name="Dahl T.A."/>
            <person name="Welti R."/>
            <person name="Goo Y.A."/>
            <person name="Leithauser B."/>
            <person name="Keller K."/>
            <person name="Cruz R."/>
            <person name="Danson M.J."/>
            <person name="Hough D.W."/>
            <person name="Maddocks D.G."/>
            <person name="Jablonski P.E."/>
            <person name="Krebs M.P."/>
            <person name="Angevine C.M."/>
            <person name="Dale H."/>
            <person name="Isenbarger T.A."/>
            <person name="Peck R.F."/>
            <person name="Pohlschroder M."/>
            <person name="Spudich J.L."/>
            <person name="Jung K.-H."/>
            <person name="Alam M."/>
            <person name="Freitas T."/>
            <person name="Hou S."/>
            <person name="Daniels C.J."/>
            <person name="Dennis P.P."/>
            <person name="Omer A.D."/>
            <person name="Ebhardt H."/>
            <person name="Lowe T.M."/>
            <person name="Liang P."/>
            <person name="Riley M."/>
            <person name="Hood L."/>
            <person name="DasSarma S."/>
        </authorList>
    </citation>
    <scope>NUCLEOTIDE SEQUENCE [LARGE SCALE GENOMIC DNA]</scope>
    <source>
        <strain>ATCC 700922 / JCM 11081 / NRC-1</strain>
    </source>
</reference>
<proteinExistence type="inferred from homology"/>
<comment type="function">
    <text evidence="1">DNA-dependent RNA polymerase (RNAP) catalyzes the transcription of DNA into RNA using the four ribonucleoside triphosphates as substrates.</text>
</comment>
<comment type="catalytic activity">
    <reaction evidence="1">
        <text>RNA(n) + a ribonucleoside 5'-triphosphate = RNA(n+1) + diphosphate</text>
        <dbReference type="Rhea" id="RHEA:21248"/>
        <dbReference type="Rhea" id="RHEA-COMP:14527"/>
        <dbReference type="Rhea" id="RHEA-COMP:17342"/>
        <dbReference type="ChEBI" id="CHEBI:33019"/>
        <dbReference type="ChEBI" id="CHEBI:61557"/>
        <dbReference type="ChEBI" id="CHEBI:140395"/>
        <dbReference type="EC" id="2.7.7.6"/>
    </reaction>
</comment>
<comment type="subunit">
    <text evidence="1">Part of the RNA polymerase complex.</text>
</comment>
<comment type="subcellular location">
    <subcellularLocation>
        <location evidence="1">Cytoplasm</location>
    </subcellularLocation>
</comment>
<comment type="similarity">
    <text evidence="1">Belongs to the archaeal Rpo11/eukaryotic RPB11/RPC19 RNA polymerase subunit family.</text>
</comment>
<name>RPO11_HALSA</name>
<gene>
    <name evidence="1" type="primary">rpo11</name>
    <name evidence="1" type="synonym">rpoL</name>
    <name type="ordered locus">VNG_0860G</name>
</gene>
<protein>
    <recommendedName>
        <fullName evidence="1">DNA-directed RNA polymerase subunit Rpo11</fullName>
        <ecNumber evidence="1">2.7.7.6</ecNumber>
    </recommendedName>
    <alternativeName>
        <fullName evidence="1">DNA-directed RNA polymerase subunit L</fullName>
    </alternativeName>
</protein>
<keyword id="KW-0963">Cytoplasm</keyword>
<keyword id="KW-0240">DNA-directed RNA polymerase</keyword>
<keyword id="KW-0548">Nucleotidyltransferase</keyword>
<keyword id="KW-1185">Reference proteome</keyword>
<keyword id="KW-0804">Transcription</keyword>
<keyword id="KW-0808">Transferase</keyword>
<evidence type="ECO:0000255" key="1">
    <source>
        <dbReference type="HAMAP-Rule" id="MF_00261"/>
    </source>
</evidence>
<sequence>MDLRVIEKDDAELTIEVAGENHTFMNVLKGTLLETDGVTAASYDMNPEQSGGQTEPLLTIKTDGDVDPVDALQAAAGHTSQKLQSFADTFEAAV</sequence>
<accession>Q9HR53</accession>
<organism>
    <name type="scientific">Halobacterium salinarum (strain ATCC 700922 / JCM 11081 / NRC-1)</name>
    <name type="common">Halobacterium halobium</name>
    <dbReference type="NCBI Taxonomy" id="64091"/>
    <lineage>
        <taxon>Archaea</taxon>
        <taxon>Methanobacteriati</taxon>
        <taxon>Methanobacteriota</taxon>
        <taxon>Stenosarchaea group</taxon>
        <taxon>Halobacteria</taxon>
        <taxon>Halobacteriales</taxon>
        <taxon>Halobacteriaceae</taxon>
        <taxon>Halobacterium</taxon>
        <taxon>Halobacterium salinarum NRC-34001</taxon>
    </lineage>
</organism>
<dbReference type="EC" id="2.7.7.6" evidence="1"/>
<dbReference type="EMBL" id="AE004437">
    <property type="protein sequence ID" value="AAG19305.1"/>
    <property type="molecule type" value="Genomic_DNA"/>
</dbReference>
<dbReference type="PIR" id="E84242">
    <property type="entry name" value="E84242"/>
</dbReference>
<dbReference type="RefSeq" id="WP_010902601.1">
    <property type="nucleotide sequence ID" value="NC_002607.1"/>
</dbReference>
<dbReference type="SMR" id="Q9HR53"/>
<dbReference type="FunCoup" id="Q9HR53">
    <property type="interactions" value="10"/>
</dbReference>
<dbReference type="STRING" id="64091.VNG_0860G"/>
<dbReference type="PaxDb" id="64091-VNG_0860G"/>
<dbReference type="KEGG" id="hal:VNG_0860G"/>
<dbReference type="PATRIC" id="fig|64091.14.peg.657"/>
<dbReference type="HOGENOM" id="CLU_090381_5_0_2"/>
<dbReference type="InParanoid" id="Q9HR53"/>
<dbReference type="OrthoDB" id="24205at2157"/>
<dbReference type="PhylomeDB" id="Q9HR53"/>
<dbReference type="Proteomes" id="UP000000554">
    <property type="component" value="Chromosome"/>
</dbReference>
<dbReference type="GO" id="GO:0005737">
    <property type="term" value="C:cytoplasm"/>
    <property type="evidence" value="ECO:0007669"/>
    <property type="project" value="UniProtKB-SubCell"/>
</dbReference>
<dbReference type="GO" id="GO:0000428">
    <property type="term" value="C:DNA-directed RNA polymerase complex"/>
    <property type="evidence" value="ECO:0007669"/>
    <property type="project" value="UniProtKB-KW"/>
</dbReference>
<dbReference type="GO" id="GO:0003677">
    <property type="term" value="F:DNA binding"/>
    <property type="evidence" value="ECO:0007669"/>
    <property type="project" value="InterPro"/>
</dbReference>
<dbReference type="GO" id="GO:0003899">
    <property type="term" value="F:DNA-directed RNA polymerase activity"/>
    <property type="evidence" value="ECO:0007669"/>
    <property type="project" value="UniProtKB-UniRule"/>
</dbReference>
<dbReference type="GO" id="GO:0046983">
    <property type="term" value="F:protein dimerization activity"/>
    <property type="evidence" value="ECO:0007669"/>
    <property type="project" value="InterPro"/>
</dbReference>
<dbReference type="GO" id="GO:0006351">
    <property type="term" value="P:DNA-templated transcription"/>
    <property type="evidence" value="ECO:0007669"/>
    <property type="project" value="UniProtKB-UniRule"/>
</dbReference>
<dbReference type="CDD" id="cd06927">
    <property type="entry name" value="RNAP_L"/>
    <property type="match status" value="1"/>
</dbReference>
<dbReference type="Gene3D" id="3.30.1360.10">
    <property type="entry name" value="RNA polymerase, RBP11-like subunit"/>
    <property type="match status" value="1"/>
</dbReference>
<dbReference type="HAMAP" id="MF_00261">
    <property type="entry name" value="RNApol_arch_Rpo11"/>
    <property type="match status" value="1"/>
</dbReference>
<dbReference type="InterPro" id="IPR036603">
    <property type="entry name" value="RBP11-like"/>
</dbReference>
<dbReference type="InterPro" id="IPR009025">
    <property type="entry name" value="RBP11-like_dimer"/>
</dbReference>
<dbReference type="InterPro" id="IPR008193">
    <property type="entry name" value="RNA_pol_Rpb11_13-16kDa_CS"/>
</dbReference>
<dbReference type="InterPro" id="IPR022905">
    <property type="entry name" value="Rpo11-like"/>
</dbReference>
<dbReference type="NCBIfam" id="NF002236">
    <property type="entry name" value="PRK01146.1-5"/>
    <property type="match status" value="1"/>
</dbReference>
<dbReference type="Pfam" id="PF13656">
    <property type="entry name" value="RNA_pol_L_2"/>
    <property type="match status" value="1"/>
</dbReference>
<dbReference type="SUPFAM" id="SSF55257">
    <property type="entry name" value="RBP11-like subunits of RNA polymerase"/>
    <property type="match status" value="1"/>
</dbReference>
<dbReference type="PROSITE" id="PS01154">
    <property type="entry name" value="RNA_POL_L_13KD"/>
    <property type="match status" value="1"/>
</dbReference>